<gene>
    <name evidence="1" type="primary">rpsT</name>
    <name type="ordered locus">Atu0323</name>
    <name type="ORF">AGR_C_563</name>
</gene>
<name>RS20_AGRFC</name>
<evidence type="ECO:0000255" key="1">
    <source>
        <dbReference type="HAMAP-Rule" id="MF_00500"/>
    </source>
</evidence>
<evidence type="ECO:0000256" key="2">
    <source>
        <dbReference type="SAM" id="MobiDB-lite"/>
    </source>
</evidence>
<evidence type="ECO:0000305" key="3"/>
<reference key="1">
    <citation type="journal article" date="2001" name="Science">
        <title>The genome of the natural genetic engineer Agrobacterium tumefaciens C58.</title>
        <authorList>
            <person name="Wood D.W."/>
            <person name="Setubal J.C."/>
            <person name="Kaul R."/>
            <person name="Monks D.E."/>
            <person name="Kitajima J.P."/>
            <person name="Okura V.K."/>
            <person name="Zhou Y."/>
            <person name="Chen L."/>
            <person name="Wood G.E."/>
            <person name="Almeida N.F. Jr."/>
            <person name="Woo L."/>
            <person name="Chen Y."/>
            <person name="Paulsen I.T."/>
            <person name="Eisen J.A."/>
            <person name="Karp P.D."/>
            <person name="Bovee D. Sr."/>
            <person name="Chapman P."/>
            <person name="Clendenning J."/>
            <person name="Deatherage G."/>
            <person name="Gillet W."/>
            <person name="Grant C."/>
            <person name="Kutyavin T."/>
            <person name="Levy R."/>
            <person name="Li M.-J."/>
            <person name="McClelland E."/>
            <person name="Palmieri A."/>
            <person name="Raymond C."/>
            <person name="Rouse G."/>
            <person name="Saenphimmachak C."/>
            <person name="Wu Z."/>
            <person name="Romero P."/>
            <person name="Gordon D."/>
            <person name="Zhang S."/>
            <person name="Yoo H."/>
            <person name="Tao Y."/>
            <person name="Biddle P."/>
            <person name="Jung M."/>
            <person name="Krespan W."/>
            <person name="Perry M."/>
            <person name="Gordon-Kamm B."/>
            <person name="Liao L."/>
            <person name="Kim S."/>
            <person name="Hendrick C."/>
            <person name="Zhao Z.-Y."/>
            <person name="Dolan M."/>
            <person name="Chumley F."/>
            <person name="Tingey S.V."/>
            <person name="Tomb J.-F."/>
            <person name="Gordon M.P."/>
            <person name="Olson M.V."/>
            <person name="Nester E.W."/>
        </authorList>
    </citation>
    <scope>NUCLEOTIDE SEQUENCE [LARGE SCALE GENOMIC DNA]</scope>
    <source>
        <strain>C58 / ATCC 33970</strain>
    </source>
</reference>
<reference key="2">
    <citation type="journal article" date="2001" name="Science">
        <title>Genome sequence of the plant pathogen and biotechnology agent Agrobacterium tumefaciens C58.</title>
        <authorList>
            <person name="Goodner B."/>
            <person name="Hinkle G."/>
            <person name="Gattung S."/>
            <person name="Miller N."/>
            <person name="Blanchard M."/>
            <person name="Qurollo B."/>
            <person name="Goldman B.S."/>
            <person name="Cao Y."/>
            <person name="Askenazi M."/>
            <person name="Halling C."/>
            <person name="Mullin L."/>
            <person name="Houmiel K."/>
            <person name="Gordon J."/>
            <person name="Vaudin M."/>
            <person name="Iartchouk O."/>
            <person name="Epp A."/>
            <person name="Liu F."/>
            <person name="Wollam C."/>
            <person name="Allinger M."/>
            <person name="Doughty D."/>
            <person name="Scott C."/>
            <person name="Lappas C."/>
            <person name="Markelz B."/>
            <person name="Flanagan C."/>
            <person name="Crowell C."/>
            <person name="Gurson J."/>
            <person name="Lomo C."/>
            <person name="Sear C."/>
            <person name="Strub G."/>
            <person name="Cielo C."/>
            <person name="Slater S."/>
        </authorList>
    </citation>
    <scope>NUCLEOTIDE SEQUENCE [LARGE SCALE GENOMIC DNA]</scope>
    <source>
        <strain>C58 / ATCC 33970</strain>
    </source>
</reference>
<proteinExistence type="inferred from homology"/>
<feature type="chain" id="PRO_0000167902" description="Small ribosomal subunit protein bS20">
    <location>
        <begin position="1"/>
        <end position="88"/>
    </location>
</feature>
<feature type="region of interest" description="Disordered" evidence="2">
    <location>
        <begin position="1"/>
        <end position="21"/>
    </location>
</feature>
<protein>
    <recommendedName>
        <fullName evidence="1">Small ribosomal subunit protein bS20</fullName>
    </recommendedName>
    <alternativeName>
        <fullName evidence="3">30S ribosomal protein S20</fullName>
    </alternativeName>
</protein>
<keyword id="KW-1185">Reference proteome</keyword>
<keyword id="KW-0687">Ribonucleoprotein</keyword>
<keyword id="KW-0689">Ribosomal protein</keyword>
<keyword id="KW-0694">RNA-binding</keyword>
<keyword id="KW-0699">rRNA-binding</keyword>
<accession>Q8UIH2</accession>
<organism>
    <name type="scientific">Agrobacterium fabrum (strain C58 / ATCC 33970)</name>
    <name type="common">Agrobacterium tumefaciens (strain C58)</name>
    <dbReference type="NCBI Taxonomy" id="176299"/>
    <lineage>
        <taxon>Bacteria</taxon>
        <taxon>Pseudomonadati</taxon>
        <taxon>Pseudomonadota</taxon>
        <taxon>Alphaproteobacteria</taxon>
        <taxon>Hyphomicrobiales</taxon>
        <taxon>Rhizobiaceae</taxon>
        <taxon>Rhizobium/Agrobacterium group</taxon>
        <taxon>Agrobacterium</taxon>
        <taxon>Agrobacterium tumefaciens complex</taxon>
    </lineage>
</organism>
<comment type="function">
    <text evidence="1">Binds directly to 16S ribosomal RNA.</text>
</comment>
<comment type="similarity">
    <text evidence="1">Belongs to the bacterial ribosomal protein bS20 family.</text>
</comment>
<sequence>MANTTSAKKATRKIARRTAVNKARRSRVRGFIRKVEEAIATGDLAVATEALKAAQPEIQRAATRGVLHGNTASRKVSRLAQRVKALSA</sequence>
<dbReference type="EMBL" id="AE007869">
    <property type="protein sequence ID" value="AAK86139.1"/>
    <property type="molecule type" value="Genomic_DNA"/>
</dbReference>
<dbReference type="PIR" id="AC2616">
    <property type="entry name" value="AC2616"/>
</dbReference>
<dbReference type="PIR" id="B97398">
    <property type="entry name" value="B97398"/>
</dbReference>
<dbReference type="RefSeq" id="NP_353354.1">
    <property type="nucleotide sequence ID" value="NC_003062.2"/>
</dbReference>
<dbReference type="RefSeq" id="WP_006310170.1">
    <property type="nucleotide sequence ID" value="NC_003062.2"/>
</dbReference>
<dbReference type="SMR" id="Q8UIH2"/>
<dbReference type="STRING" id="176299.Atu0323"/>
<dbReference type="EnsemblBacteria" id="AAK86139">
    <property type="protein sequence ID" value="AAK86139"/>
    <property type="gene ID" value="Atu0323"/>
</dbReference>
<dbReference type="GeneID" id="79861451"/>
<dbReference type="KEGG" id="atu:Atu0323"/>
<dbReference type="PATRIC" id="fig|176299.10.peg.315"/>
<dbReference type="eggNOG" id="COG0268">
    <property type="taxonomic scope" value="Bacteria"/>
</dbReference>
<dbReference type="HOGENOM" id="CLU_160655_3_0_5"/>
<dbReference type="OrthoDB" id="9807974at2"/>
<dbReference type="PhylomeDB" id="Q8UIH2"/>
<dbReference type="BioCyc" id="AGRO:ATU0323-MONOMER"/>
<dbReference type="Proteomes" id="UP000000813">
    <property type="component" value="Chromosome circular"/>
</dbReference>
<dbReference type="GO" id="GO:0005829">
    <property type="term" value="C:cytosol"/>
    <property type="evidence" value="ECO:0007669"/>
    <property type="project" value="TreeGrafter"/>
</dbReference>
<dbReference type="GO" id="GO:0015935">
    <property type="term" value="C:small ribosomal subunit"/>
    <property type="evidence" value="ECO:0007669"/>
    <property type="project" value="TreeGrafter"/>
</dbReference>
<dbReference type="GO" id="GO:0070181">
    <property type="term" value="F:small ribosomal subunit rRNA binding"/>
    <property type="evidence" value="ECO:0007669"/>
    <property type="project" value="TreeGrafter"/>
</dbReference>
<dbReference type="GO" id="GO:0003735">
    <property type="term" value="F:structural constituent of ribosome"/>
    <property type="evidence" value="ECO:0007669"/>
    <property type="project" value="InterPro"/>
</dbReference>
<dbReference type="GO" id="GO:0006412">
    <property type="term" value="P:translation"/>
    <property type="evidence" value="ECO:0007669"/>
    <property type="project" value="UniProtKB-UniRule"/>
</dbReference>
<dbReference type="FunFam" id="1.20.58.110:FF:000001">
    <property type="entry name" value="30S ribosomal protein S20"/>
    <property type="match status" value="1"/>
</dbReference>
<dbReference type="Gene3D" id="1.20.58.110">
    <property type="entry name" value="Ribosomal protein S20"/>
    <property type="match status" value="1"/>
</dbReference>
<dbReference type="HAMAP" id="MF_00500">
    <property type="entry name" value="Ribosomal_bS20"/>
    <property type="match status" value="1"/>
</dbReference>
<dbReference type="InterPro" id="IPR002583">
    <property type="entry name" value="Ribosomal_bS20"/>
</dbReference>
<dbReference type="InterPro" id="IPR036510">
    <property type="entry name" value="Ribosomal_bS20_sf"/>
</dbReference>
<dbReference type="NCBIfam" id="TIGR00029">
    <property type="entry name" value="S20"/>
    <property type="match status" value="1"/>
</dbReference>
<dbReference type="PANTHER" id="PTHR33398">
    <property type="entry name" value="30S RIBOSOMAL PROTEIN S20"/>
    <property type="match status" value="1"/>
</dbReference>
<dbReference type="PANTHER" id="PTHR33398:SF1">
    <property type="entry name" value="SMALL RIBOSOMAL SUBUNIT PROTEIN BS20C"/>
    <property type="match status" value="1"/>
</dbReference>
<dbReference type="Pfam" id="PF01649">
    <property type="entry name" value="Ribosomal_S20p"/>
    <property type="match status" value="1"/>
</dbReference>
<dbReference type="SUPFAM" id="SSF46992">
    <property type="entry name" value="Ribosomal protein S20"/>
    <property type="match status" value="1"/>
</dbReference>